<comment type="function">
    <text evidence="1">Associates with aggregated proteins, together with IbpA, to stabilize and protect them from irreversible denaturation and extensive proteolysis during heat shock and oxidative stress. Aggregated proteins bound to the IbpAB complex are more efficiently refolded and reactivated by the ATP-dependent chaperone systems ClpB and DnaK/DnaJ/GrpE. Its activity is ATP-independent.</text>
</comment>
<comment type="subunit">
    <text evidence="1">Homodimer. Forms homomultimers of about 100-150 subunits at optimal growth temperatures. Conformation changes to oligomers at high temperatures or high ionic concentrations. The decrease in size of the multimers is accompanied by an increase in chaperone activity.</text>
</comment>
<comment type="subcellular location">
    <subcellularLocation>
        <location evidence="1">Cytoplasm</location>
    </subcellularLocation>
</comment>
<comment type="domain">
    <text evidence="1">The N- and C-terminal flexible termini are involved in oligomerization and in the binding of non-native substrate proteins, and are essential for chaperone activity.</text>
</comment>
<comment type="similarity">
    <text evidence="1 2">Belongs to the small heat shock protein (HSP20) family.</text>
</comment>
<gene>
    <name evidence="1" type="primary">ibpB</name>
    <name type="ordered locus">ECA4402</name>
</gene>
<name>IBPB_PECAS</name>
<keyword id="KW-0143">Chaperone</keyword>
<keyword id="KW-0963">Cytoplasm</keyword>
<keyword id="KW-1185">Reference proteome</keyword>
<keyword id="KW-0346">Stress response</keyword>
<accession>Q6CYV3</accession>
<sequence length="150" mass="16762">MRNYDLSPLLRQWIGFDKLASSMQGSQEPIDFPPYNIEKKDDNHYRITLALAGFRQSDLDIEVEGPRLTVKGSPAPSEKAVEYLHQGLVFKPFTLSFTLAEHLHVSDAHFENGLLHIDLVRDVPEALQPQRIAIGGGRPALNQQSAEDAS</sequence>
<organism>
    <name type="scientific">Pectobacterium atrosepticum (strain SCRI 1043 / ATCC BAA-672)</name>
    <name type="common">Erwinia carotovora subsp. atroseptica</name>
    <dbReference type="NCBI Taxonomy" id="218491"/>
    <lineage>
        <taxon>Bacteria</taxon>
        <taxon>Pseudomonadati</taxon>
        <taxon>Pseudomonadota</taxon>
        <taxon>Gammaproteobacteria</taxon>
        <taxon>Enterobacterales</taxon>
        <taxon>Pectobacteriaceae</taxon>
        <taxon>Pectobacterium</taxon>
    </lineage>
</organism>
<proteinExistence type="inferred from homology"/>
<dbReference type="EMBL" id="BX950851">
    <property type="protein sequence ID" value="CAG77298.1"/>
    <property type="molecule type" value="Genomic_DNA"/>
</dbReference>
<dbReference type="RefSeq" id="WP_011095863.1">
    <property type="nucleotide sequence ID" value="NC_004547.2"/>
</dbReference>
<dbReference type="SMR" id="Q6CYV3"/>
<dbReference type="STRING" id="218491.ECA4402"/>
<dbReference type="GeneID" id="57211092"/>
<dbReference type="KEGG" id="eca:ECA4402"/>
<dbReference type="eggNOG" id="COG0071">
    <property type="taxonomic scope" value="Bacteria"/>
</dbReference>
<dbReference type="HOGENOM" id="CLU_046737_4_2_6"/>
<dbReference type="OrthoDB" id="6871152at2"/>
<dbReference type="Proteomes" id="UP000007966">
    <property type="component" value="Chromosome"/>
</dbReference>
<dbReference type="GO" id="GO:0005737">
    <property type="term" value="C:cytoplasm"/>
    <property type="evidence" value="ECO:0007669"/>
    <property type="project" value="UniProtKB-SubCell"/>
</dbReference>
<dbReference type="GO" id="GO:0050821">
    <property type="term" value="P:protein stabilization"/>
    <property type="evidence" value="ECO:0007669"/>
    <property type="project" value="UniProtKB-UniRule"/>
</dbReference>
<dbReference type="CDD" id="cd06470">
    <property type="entry name" value="ACD_IbpA-B_like"/>
    <property type="match status" value="1"/>
</dbReference>
<dbReference type="Gene3D" id="2.60.40.790">
    <property type="match status" value="1"/>
</dbReference>
<dbReference type="HAMAP" id="MF_02001">
    <property type="entry name" value="HSP20_IbpB"/>
    <property type="match status" value="1"/>
</dbReference>
<dbReference type="InterPro" id="IPR002068">
    <property type="entry name" value="A-crystallin/Hsp20_dom"/>
</dbReference>
<dbReference type="InterPro" id="IPR037913">
    <property type="entry name" value="ACD_IbpA/B"/>
</dbReference>
<dbReference type="InterPro" id="IPR008978">
    <property type="entry name" value="HSP20-like_chaperone"/>
</dbReference>
<dbReference type="InterPro" id="IPR022848">
    <property type="entry name" value="HSP20_IbpB"/>
</dbReference>
<dbReference type="NCBIfam" id="NF008618">
    <property type="entry name" value="PRK11597.1"/>
    <property type="match status" value="1"/>
</dbReference>
<dbReference type="PANTHER" id="PTHR47062">
    <property type="match status" value="1"/>
</dbReference>
<dbReference type="PANTHER" id="PTHR47062:SF2">
    <property type="entry name" value="SMALL HEAT SHOCK PROTEIN IBPB"/>
    <property type="match status" value="1"/>
</dbReference>
<dbReference type="Pfam" id="PF00011">
    <property type="entry name" value="HSP20"/>
    <property type="match status" value="1"/>
</dbReference>
<dbReference type="SUPFAM" id="SSF49764">
    <property type="entry name" value="HSP20-like chaperones"/>
    <property type="match status" value="1"/>
</dbReference>
<dbReference type="PROSITE" id="PS01031">
    <property type="entry name" value="SHSP"/>
    <property type="match status" value="1"/>
</dbReference>
<protein>
    <recommendedName>
        <fullName evidence="1">Small heat shock protein IbpB</fullName>
    </recommendedName>
    <alternativeName>
        <fullName evidence="1">16 kDa heat shock protein B</fullName>
    </alternativeName>
</protein>
<evidence type="ECO:0000255" key="1">
    <source>
        <dbReference type="HAMAP-Rule" id="MF_02001"/>
    </source>
</evidence>
<evidence type="ECO:0000255" key="2">
    <source>
        <dbReference type="PROSITE-ProRule" id="PRU00285"/>
    </source>
</evidence>
<feature type="chain" id="PRO_0000126031" description="Small heat shock protein IbpB">
    <location>
        <begin position="1"/>
        <end position="150"/>
    </location>
</feature>
<feature type="domain" description="sHSP" evidence="2">
    <location>
        <begin position="26"/>
        <end position="137"/>
    </location>
</feature>
<reference key="1">
    <citation type="journal article" date="2004" name="Proc. Natl. Acad. Sci. U.S.A.">
        <title>Genome sequence of the enterobacterial phytopathogen Erwinia carotovora subsp. atroseptica and characterization of virulence factors.</title>
        <authorList>
            <person name="Bell K.S."/>
            <person name="Sebaihia M."/>
            <person name="Pritchard L."/>
            <person name="Holden M.T.G."/>
            <person name="Hyman L.J."/>
            <person name="Holeva M.C."/>
            <person name="Thomson N.R."/>
            <person name="Bentley S.D."/>
            <person name="Churcher L.J.C."/>
            <person name="Mungall K."/>
            <person name="Atkin R."/>
            <person name="Bason N."/>
            <person name="Brooks K."/>
            <person name="Chillingworth T."/>
            <person name="Clark K."/>
            <person name="Doggett J."/>
            <person name="Fraser A."/>
            <person name="Hance Z."/>
            <person name="Hauser H."/>
            <person name="Jagels K."/>
            <person name="Moule S."/>
            <person name="Norbertczak H."/>
            <person name="Ormond D."/>
            <person name="Price C."/>
            <person name="Quail M.A."/>
            <person name="Sanders M."/>
            <person name="Walker D."/>
            <person name="Whitehead S."/>
            <person name="Salmond G.P.C."/>
            <person name="Birch P.R.J."/>
            <person name="Parkhill J."/>
            <person name="Toth I.K."/>
        </authorList>
    </citation>
    <scope>NUCLEOTIDE SEQUENCE [LARGE SCALE GENOMIC DNA]</scope>
    <source>
        <strain>SCRI 1043 / ATCC BAA-672</strain>
    </source>
</reference>